<gene>
    <name type="primary">ERF039</name>
    <name type="ordered locus">At4g16750</name>
    <name type="ORF">dl4400c</name>
    <name type="ORF">FCAALL.19</name>
</gene>
<proteinExistence type="evidence at transcript level"/>
<reference key="1">
    <citation type="submission" date="2004-02" db="EMBL/GenBank/DDBJ databases">
        <title>Molecular cloning, expression, phylogenetic and functional characterization of the Arabidopsis AP2/EREBP transcription factor family.</title>
        <authorList>
            <person name="Pan Y."/>
            <person name="Gong W."/>
            <person name="Liu D."/>
            <person name="Fu Q."/>
            <person name="Mei W.-Q."/>
            <person name="Song W.-Q."/>
            <person name="Ma L.-G."/>
            <person name="Luo J.-C."/>
            <person name="Deng X.-W."/>
            <person name="Zhu Y.-X."/>
        </authorList>
    </citation>
    <scope>NUCLEOTIDE SEQUENCE [MRNA]</scope>
</reference>
<reference key="2">
    <citation type="journal article" date="1998" name="Nature">
        <title>Analysis of 1.9 Mb of contiguous sequence from chromosome 4 of Arabidopsis thaliana.</title>
        <authorList>
            <person name="Bevan M."/>
            <person name="Bancroft I."/>
            <person name="Bent E."/>
            <person name="Love K."/>
            <person name="Goodman H.M."/>
            <person name="Dean C."/>
            <person name="Bergkamp R."/>
            <person name="Dirkse W."/>
            <person name="van Staveren M."/>
            <person name="Stiekema W."/>
            <person name="Drost L."/>
            <person name="Ridley P."/>
            <person name="Hudson S.-A."/>
            <person name="Patel K."/>
            <person name="Murphy G."/>
            <person name="Piffanelli P."/>
            <person name="Wedler H."/>
            <person name="Wedler E."/>
            <person name="Wambutt R."/>
            <person name="Weitzenegger T."/>
            <person name="Pohl T."/>
            <person name="Terryn N."/>
            <person name="Gielen J."/>
            <person name="Villarroel R."/>
            <person name="De Clercq R."/>
            <person name="van Montagu M."/>
            <person name="Lecharny A."/>
            <person name="Aubourg S."/>
            <person name="Gy I."/>
            <person name="Kreis M."/>
            <person name="Lao N."/>
            <person name="Kavanagh T."/>
            <person name="Hempel S."/>
            <person name="Kotter P."/>
            <person name="Entian K.-D."/>
            <person name="Rieger M."/>
            <person name="Schaefer M."/>
            <person name="Funk B."/>
            <person name="Mueller-Auer S."/>
            <person name="Silvey M."/>
            <person name="James R."/>
            <person name="Monfort A."/>
            <person name="Pons A."/>
            <person name="Puigdomenech P."/>
            <person name="Douka A."/>
            <person name="Voukelatou E."/>
            <person name="Milioni D."/>
            <person name="Hatzopoulos P."/>
            <person name="Piravandi E."/>
            <person name="Obermaier B."/>
            <person name="Hilbert H."/>
            <person name="Duesterhoeft A."/>
            <person name="Moores T."/>
            <person name="Jones J.D.G."/>
            <person name="Eneva T."/>
            <person name="Palme K."/>
            <person name="Benes V."/>
            <person name="Rechmann S."/>
            <person name="Ansorge W."/>
            <person name="Cooke R."/>
            <person name="Berger C."/>
            <person name="Delseny M."/>
            <person name="Voet M."/>
            <person name="Volckaert G."/>
            <person name="Mewes H.-W."/>
            <person name="Klosterman S."/>
            <person name="Schueller C."/>
            <person name="Chalwatzis N."/>
        </authorList>
    </citation>
    <scope>NUCLEOTIDE SEQUENCE [LARGE SCALE GENOMIC DNA]</scope>
    <source>
        <strain>cv. Columbia</strain>
    </source>
</reference>
<reference key="3">
    <citation type="journal article" date="1999" name="Nature">
        <title>Sequence and analysis of chromosome 4 of the plant Arabidopsis thaliana.</title>
        <authorList>
            <person name="Mayer K.F.X."/>
            <person name="Schueller C."/>
            <person name="Wambutt R."/>
            <person name="Murphy G."/>
            <person name="Volckaert G."/>
            <person name="Pohl T."/>
            <person name="Duesterhoeft A."/>
            <person name="Stiekema W."/>
            <person name="Entian K.-D."/>
            <person name="Terryn N."/>
            <person name="Harris B."/>
            <person name="Ansorge W."/>
            <person name="Brandt P."/>
            <person name="Grivell L.A."/>
            <person name="Rieger M."/>
            <person name="Weichselgartner M."/>
            <person name="de Simone V."/>
            <person name="Obermaier B."/>
            <person name="Mache R."/>
            <person name="Mueller M."/>
            <person name="Kreis M."/>
            <person name="Delseny M."/>
            <person name="Puigdomenech P."/>
            <person name="Watson M."/>
            <person name="Schmidtheini T."/>
            <person name="Reichert B."/>
            <person name="Portetelle D."/>
            <person name="Perez-Alonso M."/>
            <person name="Boutry M."/>
            <person name="Bancroft I."/>
            <person name="Vos P."/>
            <person name="Hoheisel J."/>
            <person name="Zimmermann W."/>
            <person name="Wedler H."/>
            <person name="Ridley P."/>
            <person name="Langham S.-A."/>
            <person name="McCullagh B."/>
            <person name="Bilham L."/>
            <person name="Robben J."/>
            <person name="van der Schueren J."/>
            <person name="Grymonprez B."/>
            <person name="Chuang Y.-J."/>
            <person name="Vandenbussche F."/>
            <person name="Braeken M."/>
            <person name="Weltjens I."/>
            <person name="Voet M."/>
            <person name="Bastiaens I."/>
            <person name="Aert R."/>
            <person name="Defoor E."/>
            <person name="Weitzenegger T."/>
            <person name="Bothe G."/>
            <person name="Ramsperger U."/>
            <person name="Hilbert H."/>
            <person name="Braun M."/>
            <person name="Holzer E."/>
            <person name="Brandt A."/>
            <person name="Peters S."/>
            <person name="van Staveren M."/>
            <person name="Dirkse W."/>
            <person name="Mooijman P."/>
            <person name="Klein Lankhorst R."/>
            <person name="Rose M."/>
            <person name="Hauf J."/>
            <person name="Koetter P."/>
            <person name="Berneiser S."/>
            <person name="Hempel S."/>
            <person name="Feldpausch M."/>
            <person name="Lamberth S."/>
            <person name="Van den Daele H."/>
            <person name="De Keyser A."/>
            <person name="Buysshaert C."/>
            <person name="Gielen J."/>
            <person name="Villarroel R."/>
            <person name="De Clercq R."/>
            <person name="van Montagu M."/>
            <person name="Rogers J."/>
            <person name="Cronin A."/>
            <person name="Quail M.A."/>
            <person name="Bray-Allen S."/>
            <person name="Clark L."/>
            <person name="Doggett J."/>
            <person name="Hall S."/>
            <person name="Kay M."/>
            <person name="Lennard N."/>
            <person name="McLay K."/>
            <person name="Mayes R."/>
            <person name="Pettett A."/>
            <person name="Rajandream M.A."/>
            <person name="Lyne M."/>
            <person name="Benes V."/>
            <person name="Rechmann S."/>
            <person name="Borkova D."/>
            <person name="Bloecker H."/>
            <person name="Scharfe M."/>
            <person name="Grimm M."/>
            <person name="Loehnert T.-H."/>
            <person name="Dose S."/>
            <person name="de Haan M."/>
            <person name="Maarse A.C."/>
            <person name="Schaefer M."/>
            <person name="Mueller-Auer S."/>
            <person name="Gabel C."/>
            <person name="Fuchs M."/>
            <person name="Fartmann B."/>
            <person name="Granderath K."/>
            <person name="Dauner D."/>
            <person name="Herzl A."/>
            <person name="Neumann S."/>
            <person name="Argiriou A."/>
            <person name="Vitale D."/>
            <person name="Liguori R."/>
            <person name="Piravandi E."/>
            <person name="Massenet O."/>
            <person name="Quigley F."/>
            <person name="Clabauld G."/>
            <person name="Muendlein A."/>
            <person name="Felber R."/>
            <person name="Schnabl S."/>
            <person name="Hiller R."/>
            <person name="Schmidt W."/>
            <person name="Lecharny A."/>
            <person name="Aubourg S."/>
            <person name="Chefdor F."/>
            <person name="Cooke R."/>
            <person name="Berger C."/>
            <person name="Monfort A."/>
            <person name="Casacuberta E."/>
            <person name="Gibbons T."/>
            <person name="Weber N."/>
            <person name="Vandenbol M."/>
            <person name="Bargues M."/>
            <person name="Terol J."/>
            <person name="Torres A."/>
            <person name="Perez-Perez A."/>
            <person name="Purnelle B."/>
            <person name="Bent E."/>
            <person name="Johnson S."/>
            <person name="Tacon D."/>
            <person name="Jesse T."/>
            <person name="Heijnen L."/>
            <person name="Schwarz S."/>
            <person name="Scholler P."/>
            <person name="Heber S."/>
            <person name="Francs P."/>
            <person name="Bielke C."/>
            <person name="Frishman D."/>
            <person name="Haase D."/>
            <person name="Lemcke K."/>
            <person name="Mewes H.-W."/>
            <person name="Stocker S."/>
            <person name="Zaccaria P."/>
            <person name="Bevan M."/>
            <person name="Wilson R.K."/>
            <person name="de la Bastide M."/>
            <person name="Habermann K."/>
            <person name="Parnell L."/>
            <person name="Dedhia N."/>
            <person name="Gnoj L."/>
            <person name="Schutz K."/>
            <person name="Huang E."/>
            <person name="Spiegel L."/>
            <person name="Sekhon M."/>
            <person name="Murray J."/>
            <person name="Sheet P."/>
            <person name="Cordes M."/>
            <person name="Abu-Threideh J."/>
            <person name="Stoneking T."/>
            <person name="Kalicki J."/>
            <person name="Graves T."/>
            <person name="Harmon G."/>
            <person name="Edwards J."/>
            <person name="Latreille P."/>
            <person name="Courtney L."/>
            <person name="Cloud J."/>
            <person name="Abbott A."/>
            <person name="Scott K."/>
            <person name="Johnson D."/>
            <person name="Minx P."/>
            <person name="Bentley D."/>
            <person name="Fulton B."/>
            <person name="Miller N."/>
            <person name="Greco T."/>
            <person name="Kemp K."/>
            <person name="Kramer J."/>
            <person name="Fulton L."/>
            <person name="Mardis E."/>
            <person name="Dante M."/>
            <person name="Pepin K."/>
            <person name="Hillier L.W."/>
            <person name="Nelson J."/>
            <person name="Spieth J."/>
            <person name="Ryan E."/>
            <person name="Andrews S."/>
            <person name="Geisel C."/>
            <person name="Layman D."/>
            <person name="Du H."/>
            <person name="Ali J."/>
            <person name="Berghoff A."/>
            <person name="Jones K."/>
            <person name="Drone K."/>
            <person name="Cotton M."/>
            <person name="Joshu C."/>
            <person name="Antonoiu B."/>
            <person name="Zidanic M."/>
            <person name="Strong C."/>
            <person name="Sun H."/>
            <person name="Lamar B."/>
            <person name="Yordan C."/>
            <person name="Ma P."/>
            <person name="Zhong J."/>
            <person name="Preston R."/>
            <person name="Vil D."/>
            <person name="Shekher M."/>
            <person name="Matero A."/>
            <person name="Shah R."/>
            <person name="Swaby I.K."/>
            <person name="O'Shaughnessy A."/>
            <person name="Rodriguez M."/>
            <person name="Hoffman J."/>
            <person name="Till S."/>
            <person name="Granat S."/>
            <person name="Shohdy N."/>
            <person name="Hasegawa A."/>
            <person name="Hameed A."/>
            <person name="Lodhi M."/>
            <person name="Johnson A."/>
            <person name="Chen E."/>
            <person name="Marra M.A."/>
            <person name="Martienssen R."/>
            <person name="McCombie W.R."/>
        </authorList>
    </citation>
    <scope>NUCLEOTIDE SEQUENCE [LARGE SCALE GENOMIC DNA]</scope>
    <source>
        <strain>cv. Columbia</strain>
    </source>
</reference>
<reference key="4">
    <citation type="journal article" date="2017" name="Plant J.">
        <title>Araport11: a complete reannotation of the Arabidopsis thaliana reference genome.</title>
        <authorList>
            <person name="Cheng C.Y."/>
            <person name="Krishnakumar V."/>
            <person name="Chan A.P."/>
            <person name="Thibaud-Nissen F."/>
            <person name="Schobel S."/>
            <person name="Town C.D."/>
        </authorList>
    </citation>
    <scope>GENOME REANNOTATION</scope>
    <source>
        <strain>cv. Columbia</strain>
    </source>
</reference>
<reference key="5">
    <citation type="submission" date="2005-02" db="EMBL/GenBank/DDBJ databases">
        <title>Arabidopsis ORF clones.</title>
        <authorList>
            <person name="Cheuk R.F."/>
            <person name="Chen H."/>
            <person name="Kim C.J."/>
            <person name="Shinn P."/>
            <person name="Ecker J.R."/>
        </authorList>
    </citation>
    <scope>NUCLEOTIDE SEQUENCE [LARGE SCALE MRNA]</scope>
    <source>
        <strain>cv. Columbia</strain>
    </source>
</reference>
<reference key="6">
    <citation type="journal article" date="2006" name="Plant Physiol.">
        <title>Genome-wide analysis of the ERF gene family in Arabidopsis and rice.</title>
        <authorList>
            <person name="Nakano T."/>
            <person name="Suzuki K."/>
            <person name="Fujimura T."/>
            <person name="Shinshi H."/>
        </authorList>
    </citation>
    <scope>GENE FAMILY</scope>
    <scope>NOMENCLATURE</scope>
</reference>
<sequence>MQDSSSHESQRNLRSPVPEKTGKSSKTKNEQKGVSKQPNFRGVRMRQWGKWVSEIREPRKKSRIWLGTFSTPEMAARAHDVAALAIKGGSAHLNFPELAYHLPRPASADPKDIQEAAAAAAAVDWKAPESPSSTVTSSPVADDAFSDLPDLLLDVNDHNKNDGFWDSFPYEDPFFLENY</sequence>
<protein>
    <recommendedName>
        <fullName>Ethylene-responsive transcription factor ERF039</fullName>
    </recommendedName>
</protein>
<name>ERF39_ARATH</name>
<keyword id="KW-0010">Activator</keyword>
<keyword id="KW-0238">DNA-binding</keyword>
<keyword id="KW-0936">Ethylene signaling pathway</keyword>
<keyword id="KW-0539">Nucleus</keyword>
<keyword id="KW-1185">Reference proteome</keyword>
<keyword id="KW-0804">Transcription</keyword>
<keyword id="KW-0805">Transcription regulation</keyword>
<evidence type="ECO:0000250" key="1"/>
<evidence type="ECO:0000255" key="2">
    <source>
        <dbReference type="PROSITE-ProRule" id="PRU00366"/>
    </source>
</evidence>
<evidence type="ECO:0000256" key="3">
    <source>
        <dbReference type="SAM" id="MobiDB-lite"/>
    </source>
</evidence>
<evidence type="ECO:0000305" key="4"/>
<comment type="function">
    <text evidence="1">Probably acts as a transcriptional activator. Binds to the GCC-box pathogenesis-related promoter element. May be involved in the regulation of gene expression by stress factors and by components of stress signal transduction pathways (By similarity).</text>
</comment>
<comment type="subcellular location">
    <subcellularLocation>
        <location evidence="4">Nucleus</location>
    </subcellularLocation>
</comment>
<comment type="similarity">
    <text evidence="4">Belongs to the AP2/ERF transcription factor family. ERF subfamily.</text>
</comment>
<dbReference type="EMBL" id="AY560874">
    <property type="protein sequence ID" value="AAT44941.1"/>
    <property type="molecule type" value="mRNA"/>
</dbReference>
<dbReference type="EMBL" id="Z97341">
    <property type="protein sequence ID" value="CAB46040.1"/>
    <property type="molecule type" value="Genomic_DNA"/>
</dbReference>
<dbReference type="EMBL" id="AL161544">
    <property type="protein sequence ID" value="CAB78717.1"/>
    <property type="molecule type" value="Genomic_DNA"/>
</dbReference>
<dbReference type="EMBL" id="CP002687">
    <property type="protein sequence ID" value="AEE83797.1"/>
    <property type="molecule type" value="Genomic_DNA"/>
</dbReference>
<dbReference type="EMBL" id="BT011576">
    <property type="protein sequence ID" value="AAS46629.1"/>
    <property type="molecule type" value="mRNA"/>
</dbReference>
<dbReference type="EMBL" id="BT020592">
    <property type="protein sequence ID" value="AAW80865.1"/>
    <property type="molecule type" value="mRNA"/>
</dbReference>
<dbReference type="PIR" id="F85186">
    <property type="entry name" value="F85186"/>
</dbReference>
<dbReference type="RefSeq" id="NP_193408.1">
    <property type="nucleotide sequence ID" value="NM_117777.3"/>
</dbReference>
<dbReference type="SMR" id="Q9SUK8"/>
<dbReference type="BioGRID" id="12672">
    <property type="interactions" value="4"/>
</dbReference>
<dbReference type="FunCoup" id="Q9SUK8">
    <property type="interactions" value="5"/>
</dbReference>
<dbReference type="IntAct" id="Q9SUK8">
    <property type="interactions" value="3"/>
</dbReference>
<dbReference type="STRING" id="3702.Q9SUK8"/>
<dbReference type="PaxDb" id="3702-AT4G16750.1"/>
<dbReference type="EnsemblPlants" id="AT4G16750.1">
    <property type="protein sequence ID" value="AT4G16750.1"/>
    <property type="gene ID" value="AT4G16750"/>
</dbReference>
<dbReference type="GeneID" id="827379"/>
<dbReference type="Gramene" id="AT4G16750.1">
    <property type="protein sequence ID" value="AT4G16750.1"/>
    <property type="gene ID" value="AT4G16750"/>
</dbReference>
<dbReference type="KEGG" id="ath:AT4G16750"/>
<dbReference type="Araport" id="AT4G16750"/>
<dbReference type="TAIR" id="AT4G16750">
    <property type="gene designation" value="ERF39"/>
</dbReference>
<dbReference type="eggNOG" id="ENOG502QW5S">
    <property type="taxonomic scope" value="Eukaryota"/>
</dbReference>
<dbReference type="HOGENOM" id="CLU_063331_0_1_1"/>
<dbReference type="InParanoid" id="Q9SUK8"/>
<dbReference type="OMA" id="KNDGFWD"/>
<dbReference type="PhylomeDB" id="Q9SUK8"/>
<dbReference type="PRO" id="PR:Q9SUK8"/>
<dbReference type="Proteomes" id="UP000006548">
    <property type="component" value="Chromosome 4"/>
</dbReference>
<dbReference type="ExpressionAtlas" id="Q9SUK8">
    <property type="expression patterns" value="baseline and differential"/>
</dbReference>
<dbReference type="GO" id="GO:0005634">
    <property type="term" value="C:nucleus"/>
    <property type="evidence" value="ECO:0007669"/>
    <property type="project" value="UniProtKB-SubCell"/>
</dbReference>
<dbReference type="GO" id="GO:0003700">
    <property type="term" value="F:DNA-binding transcription factor activity"/>
    <property type="evidence" value="ECO:0000250"/>
    <property type="project" value="TAIR"/>
</dbReference>
<dbReference type="GO" id="GO:0000976">
    <property type="term" value="F:transcription cis-regulatory region binding"/>
    <property type="evidence" value="ECO:0000353"/>
    <property type="project" value="TAIR"/>
</dbReference>
<dbReference type="GO" id="GO:0009873">
    <property type="term" value="P:ethylene-activated signaling pathway"/>
    <property type="evidence" value="ECO:0007669"/>
    <property type="project" value="UniProtKB-KW"/>
</dbReference>
<dbReference type="CDD" id="cd00018">
    <property type="entry name" value="AP2"/>
    <property type="match status" value="1"/>
</dbReference>
<dbReference type="FunFam" id="3.30.730.10:FF:000001">
    <property type="entry name" value="Ethylene-responsive transcription factor 2"/>
    <property type="match status" value="1"/>
</dbReference>
<dbReference type="Gene3D" id="3.30.730.10">
    <property type="entry name" value="AP2/ERF domain"/>
    <property type="match status" value="1"/>
</dbReference>
<dbReference type="InterPro" id="IPR001471">
    <property type="entry name" value="AP2/ERF_dom"/>
</dbReference>
<dbReference type="InterPro" id="IPR036955">
    <property type="entry name" value="AP2/ERF_dom_sf"/>
</dbReference>
<dbReference type="InterPro" id="IPR051032">
    <property type="entry name" value="AP2/ERF_TF_ERF_subfamily"/>
</dbReference>
<dbReference type="InterPro" id="IPR016177">
    <property type="entry name" value="DNA-bd_dom_sf"/>
</dbReference>
<dbReference type="PANTHER" id="PTHR31985:SF233">
    <property type="entry name" value="ETHYLENE-RESPONSIVE TRANSCRIPTION FACTOR ERF039"/>
    <property type="match status" value="1"/>
</dbReference>
<dbReference type="PANTHER" id="PTHR31985">
    <property type="entry name" value="ETHYLENE-RESPONSIVE TRANSCRIPTION FACTOR ERF042-RELATED"/>
    <property type="match status" value="1"/>
</dbReference>
<dbReference type="Pfam" id="PF00847">
    <property type="entry name" value="AP2"/>
    <property type="match status" value="1"/>
</dbReference>
<dbReference type="PRINTS" id="PR00367">
    <property type="entry name" value="ETHRSPELEMNT"/>
</dbReference>
<dbReference type="SMART" id="SM00380">
    <property type="entry name" value="AP2"/>
    <property type="match status" value="1"/>
</dbReference>
<dbReference type="SUPFAM" id="SSF54171">
    <property type="entry name" value="DNA-binding domain"/>
    <property type="match status" value="1"/>
</dbReference>
<dbReference type="PROSITE" id="PS51032">
    <property type="entry name" value="AP2_ERF"/>
    <property type="match status" value="1"/>
</dbReference>
<accession>Q9SUK8</accession>
<feature type="chain" id="PRO_0000290391" description="Ethylene-responsive transcription factor ERF039">
    <location>
        <begin position="1"/>
        <end position="179"/>
    </location>
</feature>
<feature type="DNA-binding region" description="AP2/ERF" evidence="2">
    <location>
        <begin position="39"/>
        <end position="96"/>
    </location>
</feature>
<feature type="region of interest" description="Disordered" evidence="3">
    <location>
        <begin position="1"/>
        <end position="42"/>
    </location>
</feature>
<feature type="compositionally biased region" description="Basic and acidic residues" evidence="3">
    <location>
        <begin position="1"/>
        <end position="11"/>
    </location>
</feature>
<organism>
    <name type="scientific">Arabidopsis thaliana</name>
    <name type="common">Mouse-ear cress</name>
    <dbReference type="NCBI Taxonomy" id="3702"/>
    <lineage>
        <taxon>Eukaryota</taxon>
        <taxon>Viridiplantae</taxon>
        <taxon>Streptophyta</taxon>
        <taxon>Embryophyta</taxon>
        <taxon>Tracheophyta</taxon>
        <taxon>Spermatophyta</taxon>
        <taxon>Magnoliopsida</taxon>
        <taxon>eudicotyledons</taxon>
        <taxon>Gunneridae</taxon>
        <taxon>Pentapetalae</taxon>
        <taxon>rosids</taxon>
        <taxon>malvids</taxon>
        <taxon>Brassicales</taxon>
        <taxon>Brassicaceae</taxon>
        <taxon>Camelineae</taxon>
        <taxon>Arabidopsis</taxon>
    </lineage>
</organism>